<evidence type="ECO:0000255" key="1">
    <source>
        <dbReference type="HAMAP-Rule" id="MF_00484"/>
    </source>
</evidence>
<gene>
    <name evidence="1" type="primary">glgA</name>
    <name type="ordered locus">pc1596</name>
</gene>
<dbReference type="EC" id="2.4.1.21" evidence="1"/>
<dbReference type="EMBL" id="BX908798">
    <property type="protein sequence ID" value="CAF24320.1"/>
    <property type="molecule type" value="Genomic_DNA"/>
</dbReference>
<dbReference type="RefSeq" id="WP_011176142.1">
    <property type="nucleotide sequence ID" value="NC_005861.2"/>
</dbReference>
<dbReference type="SMR" id="Q6MAS9"/>
<dbReference type="STRING" id="264201.pc1596"/>
<dbReference type="CAZy" id="GT5">
    <property type="family name" value="Glycosyltransferase Family 5"/>
</dbReference>
<dbReference type="KEGG" id="pcu:PC_RS07650"/>
<dbReference type="eggNOG" id="COG0297">
    <property type="taxonomic scope" value="Bacteria"/>
</dbReference>
<dbReference type="HOGENOM" id="CLU_009583_18_3_0"/>
<dbReference type="OrthoDB" id="9808590at2"/>
<dbReference type="UniPathway" id="UPA00164"/>
<dbReference type="Proteomes" id="UP000000529">
    <property type="component" value="Chromosome"/>
</dbReference>
<dbReference type="GO" id="GO:0009011">
    <property type="term" value="F:alpha-1,4-glucan glucosyltransferase (ADP-glucose donor) activity"/>
    <property type="evidence" value="ECO:0007669"/>
    <property type="project" value="UniProtKB-UniRule"/>
</dbReference>
<dbReference type="GO" id="GO:0004373">
    <property type="term" value="F:alpha-1,4-glucan glucosyltransferase (UDP-glucose donor) activity"/>
    <property type="evidence" value="ECO:0007669"/>
    <property type="project" value="InterPro"/>
</dbReference>
<dbReference type="GO" id="GO:0005978">
    <property type="term" value="P:glycogen biosynthetic process"/>
    <property type="evidence" value="ECO:0007669"/>
    <property type="project" value="UniProtKB-UniRule"/>
</dbReference>
<dbReference type="CDD" id="cd03791">
    <property type="entry name" value="GT5_Glycogen_synthase_DULL1-like"/>
    <property type="match status" value="1"/>
</dbReference>
<dbReference type="Gene3D" id="3.40.50.2000">
    <property type="entry name" value="Glycogen Phosphorylase B"/>
    <property type="match status" value="2"/>
</dbReference>
<dbReference type="HAMAP" id="MF_00484">
    <property type="entry name" value="Glycogen_synth"/>
    <property type="match status" value="1"/>
</dbReference>
<dbReference type="InterPro" id="IPR001296">
    <property type="entry name" value="Glyco_trans_1"/>
</dbReference>
<dbReference type="InterPro" id="IPR011835">
    <property type="entry name" value="GS/SS"/>
</dbReference>
<dbReference type="InterPro" id="IPR013534">
    <property type="entry name" value="Starch_synth_cat_dom"/>
</dbReference>
<dbReference type="NCBIfam" id="TIGR02095">
    <property type="entry name" value="glgA"/>
    <property type="match status" value="1"/>
</dbReference>
<dbReference type="NCBIfam" id="NF001905">
    <property type="entry name" value="PRK00654.2-4"/>
    <property type="match status" value="1"/>
</dbReference>
<dbReference type="PANTHER" id="PTHR46083">
    <property type="match status" value="1"/>
</dbReference>
<dbReference type="PANTHER" id="PTHR46083:SF1">
    <property type="entry name" value="GLYCOGEN SYNTHASE 2-RELATED"/>
    <property type="match status" value="1"/>
</dbReference>
<dbReference type="Pfam" id="PF08323">
    <property type="entry name" value="Glyco_transf_5"/>
    <property type="match status" value="1"/>
</dbReference>
<dbReference type="Pfam" id="PF00534">
    <property type="entry name" value="Glycos_transf_1"/>
    <property type="match status" value="1"/>
</dbReference>
<dbReference type="SUPFAM" id="SSF53756">
    <property type="entry name" value="UDP-Glycosyltransferase/glycogen phosphorylase"/>
    <property type="match status" value="1"/>
</dbReference>
<name>GLGA_PARUW</name>
<keyword id="KW-0320">Glycogen biosynthesis</keyword>
<keyword id="KW-0328">Glycosyltransferase</keyword>
<keyword id="KW-1185">Reference proteome</keyword>
<keyword id="KW-0808">Transferase</keyword>
<reference key="1">
    <citation type="journal article" date="2004" name="Science">
        <title>Illuminating the evolutionary history of chlamydiae.</title>
        <authorList>
            <person name="Horn M."/>
            <person name="Collingro A."/>
            <person name="Schmitz-Esser S."/>
            <person name="Beier C.L."/>
            <person name="Purkhold U."/>
            <person name="Fartmann B."/>
            <person name="Brandt P."/>
            <person name="Nyakatura G.J."/>
            <person name="Droege M."/>
            <person name="Frishman D."/>
            <person name="Rattei T."/>
            <person name="Mewes H.-W."/>
            <person name="Wagner M."/>
        </authorList>
    </citation>
    <scope>NUCLEOTIDE SEQUENCE [LARGE SCALE GENOMIC DNA]</scope>
    <source>
        <strain>UWE25</strain>
    </source>
</reference>
<protein>
    <recommendedName>
        <fullName evidence="1">Glycogen synthase</fullName>
        <ecNumber evidence="1">2.4.1.21</ecNumber>
    </recommendedName>
    <alternativeName>
        <fullName evidence="1">Starch [bacterial glycogen] synthase</fullName>
    </alternativeName>
</protein>
<proteinExistence type="inferred from homology"/>
<accession>Q6MAS9</accession>
<comment type="function">
    <text evidence="1">Synthesizes alpha-1,4-glucan chains using ADP-glucose.</text>
</comment>
<comment type="catalytic activity">
    <reaction evidence="1">
        <text>[(1-&gt;4)-alpha-D-glucosyl](n) + ADP-alpha-D-glucose = [(1-&gt;4)-alpha-D-glucosyl](n+1) + ADP + H(+)</text>
        <dbReference type="Rhea" id="RHEA:18189"/>
        <dbReference type="Rhea" id="RHEA-COMP:9584"/>
        <dbReference type="Rhea" id="RHEA-COMP:9587"/>
        <dbReference type="ChEBI" id="CHEBI:15378"/>
        <dbReference type="ChEBI" id="CHEBI:15444"/>
        <dbReference type="ChEBI" id="CHEBI:57498"/>
        <dbReference type="ChEBI" id="CHEBI:456216"/>
        <dbReference type="EC" id="2.4.1.21"/>
    </reaction>
</comment>
<comment type="pathway">
    <text evidence="1">Glycan biosynthesis; glycogen biosynthesis.</text>
</comment>
<comment type="similarity">
    <text evidence="1">Belongs to the glycosyltransferase 1 family. Bacterial/plant glycogen synthase subfamily.</text>
</comment>
<organism>
    <name type="scientific">Protochlamydia amoebophila (strain UWE25)</name>
    <dbReference type="NCBI Taxonomy" id="264201"/>
    <lineage>
        <taxon>Bacteria</taxon>
        <taxon>Pseudomonadati</taxon>
        <taxon>Chlamydiota</taxon>
        <taxon>Chlamydiia</taxon>
        <taxon>Parachlamydiales</taxon>
        <taxon>Parachlamydiaceae</taxon>
        <taxon>Candidatus Protochlamydia</taxon>
    </lineage>
</organism>
<sequence>MHIIHIASELAPLAKVGGLADVVLGLCRELSWKGHDVDIIIPKYDCMDSEQIRDLTVDYFELPSFYNGEWFFNTVWMGWVENLKVYFIEPHHPRFFFNRGCFYGCEDDLERFLYFSRTALEFLYKKSILPDIIHLHDWQTAVIAPLYKDMYQKLGYTKPKILFTIHNMEYQGKCAAHDLNYIGLDGNRYQQHSFMQDNLYPHLINLLKGGIVYSDFVTTVSPNYAKEVLTPKEGRGLEATLVEYQHKFKGILNGIDYSYWNPEIDRFLPAHYSLREMPKNKKDRNTVDKKGFIKKILREKLYLAEEHRPIIGCITRLVPQKGIDLIKHTIRHIVEKKGQFILLGSSPIPSINDEFHRLKHQYTDHPHIHLILHHSEELAHLIYAGSDMFIVPSLFEPCGLTQIIALKYGTVPIVRRTGGLADTIIDVDHTDQQPDKKNGYVFDDPDANGIDSAIDRAIHCWFEEPEKWRQLMLNGMKMDFSWNQSSDCYLKIYQAISAKN</sequence>
<feature type="chain" id="PRO_0000188627" description="Glycogen synthase">
    <location>
        <begin position="1"/>
        <end position="500"/>
    </location>
</feature>
<feature type="binding site" evidence="1">
    <location>
        <position position="15"/>
    </location>
    <ligand>
        <name>ADP-alpha-D-glucose</name>
        <dbReference type="ChEBI" id="CHEBI:57498"/>
    </ligand>
</feature>